<gene>
    <name type="primary">prt1</name>
    <name type="ORF">SS1G_04820</name>
</gene>
<protein>
    <recommendedName>
        <fullName evidence="1">Eukaryotic translation initiation factor 3 subunit B</fullName>
        <shortName evidence="1">eIF3b</shortName>
    </recommendedName>
    <alternativeName>
        <fullName evidence="1">Eukaryotic translation initiation factor 3 90 kDa subunit homolog</fullName>
        <shortName evidence="1">eIF3 p90</shortName>
    </alternativeName>
    <alternativeName>
        <fullName evidence="1">Translation initiation factor eIF3, p90 subunit homolog</fullName>
    </alternativeName>
</protein>
<organism>
    <name type="scientific">Sclerotinia sclerotiorum (strain ATCC 18683 / 1980 / Ss-1)</name>
    <name type="common">White mold</name>
    <name type="synonym">Whetzelinia sclerotiorum</name>
    <dbReference type="NCBI Taxonomy" id="665079"/>
    <lineage>
        <taxon>Eukaryota</taxon>
        <taxon>Fungi</taxon>
        <taxon>Dikarya</taxon>
        <taxon>Ascomycota</taxon>
        <taxon>Pezizomycotina</taxon>
        <taxon>Leotiomycetes</taxon>
        <taxon>Helotiales</taxon>
        <taxon>Sclerotiniaceae</taxon>
        <taxon>Sclerotinia</taxon>
    </lineage>
</organism>
<accession>A7EHM8</accession>
<evidence type="ECO:0000255" key="1">
    <source>
        <dbReference type="HAMAP-Rule" id="MF_03001"/>
    </source>
</evidence>
<evidence type="ECO:0000256" key="2">
    <source>
        <dbReference type="SAM" id="MobiDB-lite"/>
    </source>
</evidence>
<keyword id="KW-0963">Cytoplasm</keyword>
<keyword id="KW-0396">Initiation factor</keyword>
<keyword id="KW-0648">Protein biosynthesis</keyword>
<keyword id="KW-1185">Reference proteome</keyword>
<keyword id="KW-0677">Repeat</keyword>
<keyword id="KW-0694">RNA-binding</keyword>
<keyword id="KW-0853">WD repeat</keyword>
<comment type="function">
    <text evidence="1">RNA-binding component of the eukaryotic translation initiation factor 3 (eIF-3) complex, which is involved in protein synthesis of a specialized repertoire of mRNAs and, together with other initiation factors, stimulates binding of mRNA and methionyl-tRNAi to the 40S ribosome. The eIF-3 complex specifically targets and initiates translation of a subset of mRNAs involved in cell proliferation.</text>
</comment>
<comment type="subunit">
    <text evidence="1">Component of the eukaryotic translation initiation factor 3 (eIF-3) complex.</text>
</comment>
<comment type="subcellular location">
    <subcellularLocation>
        <location evidence="1">Cytoplasm</location>
    </subcellularLocation>
</comment>
<comment type="similarity">
    <text evidence="1">Belongs to the eIF-3 subunit B family.</text>
</comment>
<sequence>MAPSFDHLPDPEEDEYDEEELDISDLRERFEVQLEQGLDTFVVIDGLPEVNEDTKPKLIKFLLRKLDSVGQTKKDSIHMPIGPDGKSFKFAFVEYSSPAEAIAACKALDGVPLDKKHTLRVNKLTDIDRYGREGRIDENYTPPKIEEFTEKEHLRSWLADPAGRGRDQFVMYKDDRVQVFWNNEKDAPESIVDRQHWTESFVQWSPQGTFLTSMHQQGVQLWGGPSWTRQKRFAHPFVNLVDFSPGEKYLTTWSNRPISIGEEGHPALSVDDDGKNYVIWDIETGLPLRSFANLDLPSNSVDAEGNPVKRKIQWPAFKWSSDDKYVARLTQGSSISVYELPRMNLLDKTSIKIDGVMDFDWAPATPHREGVKNYEQLFCYWTPEIGSNPAKVGLMSIPSKEVVRTLNLFSVTDAKLHWQSDASYLCVKVDRHSKSKKSLATSLEIFRVKEKGVPVEVVDSIKDTVINFAWEPKGDRFVIITTAEVVAATAVPPKTSVSFFCPEKVKGNGVGNFKHIRTYDKKNSNAIYWSPKGRFVIVATVHSQQSFDMEFYDMDFEGEKPESDKDLTANLQLMNTADHYGVTDIDWDPTGRFVATSASIWKHTMENGYHLYDFKGEQLREEPVEKFKQWLWRPRPPTLLSKEEQKQIRKNLREYSKVFDQEDADRGASADLAVVEHRRRLLDEWLAWRANIEEDVQAEREDAGLPRDPLEPLKSKMASGDEGQAIEIEEIVEEIVEETEEIIS</sequence>
<reference key="1">
    <citation type="journal article" date="2011" name="PLoS Genet.">
        <title>Genomic analysis of the necrotrophic fungal pathogens Sclerotinia sclerotiorum and Botrytis cinerea.</title>
        <authorList>
            <person name="Amselem J."/>
            <person name="Cuomo C.A."/>
            <person name="van Kan J.A.L."/>
            <person name="Viaud M."/>
            <person name="Benito E.P."/>
            <person name="Couloux A."/>
            <person name="Coutinho P.M."/>
            <person name="de Vries R.P."/>
            <person name="Dyer P.S."/>
            <person name="Fillinger S."/>
            <person name="Fournier E."/>
            <person name="Gout L."/>
            <person name="Hahn M."/>
            <person name="Kohn L."/>
            <person name="Lapalu N."/>
            <person name="Plummer K.M."/>
            <person name="Pradier J.-M."/>
            <person name="Quevillon E."/>
            <person name="Sharon A."/>
            <person name="Simon A."/>
            <person name="ten Have A."/>
            <person name="Tudzynski B."/>
            <person name="Tudzynski P."/>
            <person name="Wincker P."/>
            <person name="Andrew M."/>
            <person name="Anthouard V."/>
            <person name="Beever R.E."/>
            <person name="Beffa R."/>
            <person name="Benoit I."/>
            <person name="Bouzid O."/>
            <person name="Brault B."/>
            <person name="Chen Z."/>
            <person name="Choquer M."/>
            <person name="Collemare J."/>
            <person name="Cotton P."/>
            <person name="Danchin E.G."/>
            <person name="Da Silva C."/>
            <person name="Gautier A."/>
            <person name="Giraud C."/>
            <person name="Giraud T."/>
            <person name="Gonzalez C."/>
            <person name="Grossetete S."/>
            <person name="Gueldener U."/>
            <person name="Henrissat B."/>
            <person name="Howlett B.J."/>
            <person name="Kodira C."/>
            <person name="Kretschmer M."/>
            <person name="Lappartient A."/>
            <person name="Leroch M."/>
            <person name="Levis C."/>
            <person name="Mauceli E."/>
            <person name="Neuveglise C."/>
            <person name="Oeser B."/>
            <person name="Pearson M."/>
            <person name="Poulain J."/>
            <person name="Poussereau N."/>
            <person name="Quesneville H."/>
            <person name="Rascle C."/>
            <person name="Schumacher J."/>
            <person name="Segurens B."/>
            <person name="Sexton A."/>
            <person name="Silva E."/>
            <person name="Sirven C."/>
            <person name="Soanes D.M."/>
            <person name="Talbot N.J."/>
            <person name="Templeton M."/>
            <person name="Yandava C."/>
            <person name="Yarden O."/>
            <person name="Zeng Q."/>
            <person name="Rollins J.A."/>
            <person name="Lebrun M.-H."/>
            <person name="Dickman M."/>
        </authorList>
    </citation>
    <scope>NUCLEOTIDE SEQUENCE [LARGE SCALE GENOMIC DNA]</scope>
    <source>
        <strain>ATCC 18683 / 1980 / Ss-1</strain>
    </source>
</reference>
<proteinExistence type="inferred from homology"/>
<dbReference type="EMBL" id="CH476625">
    <property type="protein sequence ID" value="EDO02344.1"/>
    <property type="molecule type" value="Genomic_DNA"/>
</dbReference>
<dbReference type="RefSeq" id="XP_001595012.1">
    <property type="nucleotide sequence ID" value="XM_001594962.1"/>
</dbReference>
<dbReference type="SMR" id="A7EHM8"/>
<dbReference type="FunCoup" id="A7EHM8">
    <property type="interactions" value="1273"/>
</dbReference>
<dbReference type="STRING" id="665079.A7EHM8"/>
<dbReference type="EnsemblFungi" id="EDO02344">
    <property type="protein sequence ID" value="EDO02344"/>
    <property type="gene ID" value="SS1G_04820"/>
</dbReference>
<dbReference type="GeneID" id="5490837"/>
<dbReference type="KEGG" id="ssl:SS1G_04820"/>
<dbReference type="VEuPathDB" id="FungiDB:sscle_02g013860"/>
<dbReference type="eggNOG" id="KOG2314">
    <property type="taxonomic scope" value="Eukaryota"/>
</dbReference>
<dbReference type="HOGENOM" id="CLU_011152_4_0_1"/>
<dbReference type="InParanoid" id="A7EHM8"/>
<dbReference type="OMA" id="LWGGPQF"/>
<dbReference type="OrthoDB" id="10250414at2759"/>
<dbReference type="Proteomes" id="UP000001312">
    <property type="component" value="Unassembled WGS sequence"/>
</dbReference>
<dbReference type="GO" id="GO:0010494">
    <property type="term" value="C:cytoplasmic stress granule"/>
    <property type="evidence" value="ECO:0007669"/>
    <property type="project" value="EnsemblFungi"/>
</dbReference>
<dbReference type="GO" id="GO:0016282">
    <property type="term" value="C:eukaryotic 43S preinitiation complex"/>
    <property type="evidence" value="ECO:0007669"/>
    <property type="project" value="UniProtKB-UniRule"/>
</dbReference>
<dbReference type="GO" id="GO:0033290">
    <property type="term" value="C:eukaryotic 48S preinitiation complex"/>
    <property type="evidence" value="ECO:0007669"/>
    <property type="project" value="UniProtKB-UniRule"/>
</dbReference>
<dbReference type="GO" id="GO:0005852">
    <property type="term" value="C:eukaryotic translation initiation factor 3 complex"/>
    <property type="evidence" value="ECO:0000318"/>
    <property type="project" value="GO_Central"/>
</dbReference>
<dbReference type="GO" id="GO:0071540">
    <property type="term" value="C:eukaryotic translation initiation factor 3 complex, eIF3e"/>
    <property type="evidence" value="ECO:0007669"/>
    <property type="project" value="EnsemblFungi"/>
</dbReference>
<dbReference type="GO" id="GO:0071541">
    <property type="term" value="C:eukaryotic translation initiation factor 3 complex, eIF3m"/>
    <property type="evidence" value="ECO:0007669"/>
    <property type="project" value="EnsemblFungi"/>
</dbReference>
<dbReference type="GO" id="GO:0043614">
    <property type="term" value="C:multi-eIF complex"/>
    <property type="evidence" value="ECO:0007669"/>
    <property type="project" value="EnsemblFungi"/>
</dbReference>
<dbReference type="GO" id="GO:0042802">
    <property type="term" value="F:identical protein binding"/>
    <property type="evidence" value="ECO:0007669"/>
    <property type="project" value="EnsemblFungi"/>
</dbReference>
<dbReference type="GO" id="GO:0003723">
    <property type="term" value="F:RNA binding"/>
    <property type="evidence" value="ECO:0007669"/>
    <property type="project" value="UniProtKB-UniRule"/>
</dbReference>
<dbReference type="GO" id="GO:0003743">
    <property type="term" value="F:translation initiation factor activity"/>
    <property type="evidence" value="ECO:0007669"/>
    <property type="project" value="UniProtKB-UniRule"/>
</dbReference>
<dbReference type="GO" id="GO:0031369">
    <property type="term" value="F:translation initiation factor binding"/>
    <property type="evidence" value="ECO:0007669"/>
    <property type="project" value="InterPro"/>
</dbReference>
<dbReference type="GO" id="GO:0001732">
    <property type="term" value="P:formation of cytoplasmic translation initiation complex"/>
    <property type="evidence" value="ECO:0007669"/>
    <property type="project" value="UniProtKB-UniRule"/>
</dbReference>
<dbReference type="GO" id="GO:0006413">
    <property type="term" value="P:translational initiation"/>
    <property type="evidence" value="ECO:0000318"/>
    <property type="project" value="GO_Central"/>
</dbReference>
<dbReference type="CDD" id="cd12278">
    <property type="entry name" value="RRM_eIF3B"/>
    <property type="match status" value="1"/>
</dbReference>
<dbReference type="FunFam" id="2.130.10.10:FF:000419">
    <property type="entry name" value="Eukaryotic translation initiation factor 3 subunit B"/>
    <property type="match status" value="1"/>
</dbReference>
<dbReference type="FunFam" id="3.30.70.330:FF:000235">
    <property type="entry name" value="Eukaryotic translation initiation factor 3 subunit B"/>
    <property type="match status" value="1"/>
</dbReference>
<dbReference type="Gene3D" id="3.30.70.330">
    <property type="match status" value="1"/>
</dbReference>
<dbReference type="Gene3D" id="2.130.10.10">
    <property type="entry name" value="YVTN repeat-like/Quinoprotein amine dehydrogenase"/>
    <property type="match status" value="1"/>
</dbReference>
<dbReference type="HAMAP" id="MF_03001">
    <property type="entry name" value="eIF3b"/>
    <property type="match status" value="1"/>
</dbReference>
<dbReference type="InterPro" id="IPR011400">
    <property type="entry name" value="EIF3B"/>
</dbReference>
<dbReference type="InterPro" id="IPR034363">
    <property type="entry name" value="eIF3B_RRM"/>
</dbReference>
<dbReference type="InterPro" id="IPR012677">
    <property type="entry name" value="Nucleotide-bd_a/b_plait_sf"/>
</dbReference>
<dbReference type="InterPro" id="IPR035979">
    <property type="entry name" value="RBD_domain_sf"/>
</dbReference>
<dbReference type="InterPro" id="IPR000504">
    <property type="entry name" value="RRM_dom"/>
</dbReference>
<dbReference type="InterPro" id="IPR013979">
    <property type="entry name" value="TIF_beta_prop-like"/>
</dbReference>
<dbReference type="InterPro" id="IPR015943">
    <property type="entry name" value="WD40/YVTN_repeat-like_dom_sf"/>
</dbReference>
<dbReference type="PANTHER" id="PTHR14068">
    <property type="entry name" value="EUKARYOTIC TRANSLATION INITIATION FACTOR 3 EIF3 -RELATED"/>
    <property type="match status" value="1"/>
</dbReference>
<dbReference type="PANTHER" id="PTHR14068:SF0">
    <property type="entry name" value="EUKARYOTIC TRANSLATION INITIATION FACTOR 3 SUBUNIT B"/>
    <property type="match status" value="1"/>
</dbReference>
<dbReference type="Pfam" id="PF08662">
    <property type="entry name" value="eIF2A"/>
    <property type="match status" value="1"/>
</dbReference>
<dbReference type="Pfam" id="PF00076">
    <property type="entry name" value="RRM_1"/>
    <property type="match status" value="1"/>
</dbReference>
<dbReference type="PIRSF" id="PIRSF036424">
    <property type="entry name" value="eIF3b"/>
    <property type="match status" value="1"/>
</dbReference>
<dbReference type="SMART" id="SM00360">
    <property type="entry name" value="RRM"/>
    <property type="match status" value="1"/>
</dbReference>
<dbReference type="SUPFAM" id="SSF82171">
    <property type="entry name" value="DPP6 N-terminal domain-like"/>
    <property type="match status" value="1"/>
</dbReference>
<dbReference type="SUPFAM" id="SSF54928">
    <property type="entry name" value="RNA-binding domain, RBD"/>
    <property type="match status" value="1"/>
</dbReference>
<dbReference type="PROSITE" id="PS50102">
    <property type="entry name" value="RRM"/>
    <property type="match status" value="1"/>
</dbReference>
<name>EIF3B_SCLS1</name>
<feature type="chain" id="PRO_0000366879" description="Eukaryotic translation initiation factor 3 subunit B">
    <location>
        <begin position="1"/>
        <end position="744"/>
    </location>
</feature>
<feature type="domain" description="RRM" evidence="1">
    <location>
        <begin position="40"/>
        <end position="126"/>
    </location>
</feature>
<feature type="repeat" description="WD 1">
    <location>
        <begin position="193"/>
        <end position="232"/>
    </location>
</feature>
<feature type="repeat" description="WD 2">
    <location>
        <begin position="234"/>
        <end position="290"/>
    </location>
</feature>
<feature type="repeat" description="WD 3">
    <location>
        <begin position="307"/>
        <end position="348"/>
    </location>
</feature>
<feature type="repeat" description="WD 4">
    <location>
        <begin position="577"/>
        <end position="622"/>
    </location>
</feature>
<feature type="region of interest" description="Disordered" evidence="2">
    <location>
        <begin position="1"/>
        <end position="20"/>
    </location>
</feature>
<feature type="region of interest" description="Disordered" evidence="2">
    <location>
        <begin position="699"/>
        <end position="722"/>
    </location>
</feature>
<feature type="compositionally biased region" description="Acidic residues" evidence="2">
    <location>
        <begin position="11"/>
        <end position="20"/>
    </location>
</feature>
<feature type="compositionally biased region" description="Basic and acidic residues" evidence="2">
    <location>
        <begin position="699"/>
        <end position="714"/>
    </location>
</feature>